<proteinExistence type="evidence at protein level"/>
<organism>
    <name type="scientific">Homo sapiens</name>
    <name type="common">Human</name>
    <dbReference type="NCBI Taxonomy" id="9606"/>
    <lineage>
        <taxon>Eukaryota</taxon>
        <taxon>Metazoa</taxon>
        <taxon>Chordata</taxon>
        <taxon>Craniata</taxon>
        <taxon>Vertebrata</taxon>
        <taxon>Euteleostomi</taxon>
        <taxon>Mammalia</taxon>
        <taxon>Eutheria</taxon>
        <taxon>Euarchontoglires</taxon>
        <taxon>Primates</taxon>
        <taxon>Haplorrhini</taxon>
        <taxon>Catarrhini</taxon>
        <taxon>Hominidae</taxon>
        <taxon>Homo</taxon>
    </lineage>
</organism>
<evidence type="ECO:0000250" key="1">
    <source>
        <dbReference type="UniProtKB" id="Q8CJ12"/>
    </source>
</evidence>
<evidence type="ECO:0000255" key="2"/>
<evidence type="ECO:0000255" key="3">
    <source>
        <dbReference type="PROSITE-ProRule" id="PRU00098"/>
    </source>
</evidence>
<evidence type="ECO:0000256" key="4">
    <source>
        <dbReference type="SAM" id="MobiDB-lite"/>
    </source>
</evidence>
<evidence type="ECO:0000269" key="5">
    <source>
    </source>
</evidence>
<evidence type="ECO:0000269" key="6">
    <source>
    </source>
</evidence>
<evidence type="ECO:0000269" key="7">
    <source>
    </source>
</evidence>
<evidence type="ECO:0000269" key="8">
    <source>
    </source>
</evidence>
<evidence type="ECO:0000269" key="9">
    <source>
    </source>
</evidence>
<evidence type="ECO:0000269" key="10">
    <source>
    </source>
</evidence>
<evidence type="ECO:0000269" key="11">
    <source>
    </source>
</evidence>
<evidence type="ECO:0000269" key="12">
    <source>
    </source>
</evidence>
<evidence type="ECO:0000269" key="13">
    <source>
    </source>
</evidence>
<evidence type="ECO:0000269" key="14">
    <source>
    </source>
</evidence>
<evidence type="ECO:0000269" key="15">
    <source>
    </source>
</evidence>
<evidence type="ECO:0000269" key="16">
    <source>
    </source>
</evidence>
<evidence type="ECO:0000269" key="17">
    <source>
    </source>
</evidence>
<evidence type="ECO:0000269" key="18">
    <source>
    </source>
</evidence>
<evidence type="ECO:0000269" key="19">
    <source>
    </source>
</evidence>
<evidence type="ECO:0000269" key="20">
    <source>
    </source>
</evidence>
<evidence type="ECO:0000303" key="21">
    <source>
    </source>
</evidence>
<evidence type="ECO:0000303" key="22">
    <source>
    </source>
</evidence>
<evidence type="ECO:0000303" key="23">
    <source>
    </source>
</evidence>
<evidence type="ECO:0000303" key="24">
    <source>
    </source>
</evidence>
<evidence type="ECO:0000303" key="25">
    <source>
    </source>
</evidence>
<evidence type="ECO:0000305" key="26"/>
<evidence type="ECO:0000305" key="27">
    <source>
    </source>
</evidence>
<evidence type="ECO:0000312" key="28">
    <source>
        <dbReference type="HGNC" id="HGNC:4516"/>
    </source>
</evidence>
<evidence type="ECO:0007744" key="29">
    <source>
    </source>
</evidence>
<evidence type="ECO:0007744" key="30">
    <source>
    </source>
</evidence>
<name>AGRG2_HUMAN</name>
<keyword id="KW-0025">Alternative splicing</keyword>
<keyword id="KW-1003">Cell membrane</keyword>
<keyword id="KW-0225">Disease variant</keyword>
<keyword id="KW-1015">Disulfide bond</keyword>
<keyword id="KW-0297">G-protein coupled receptor</keyword>
<keyword id="KW-0325">Glycoprotein</keyword>
<keyword id="KW-0472">Membrane</keyword>
<keyword id="KW-0597">Phosphoprotein</keyword>
<keyword id="KW-1267">Proteomics identification</keyword>
<keyword id="KW-0675">Receptor</keyword>
<keyword id="KW-1185">Reference proteome</keyword>
<keyword id="KW-0732">Signal</keyword>
<keyword id="KW-0807">Transducer</keyword>
<keyword id="KW-0812">Transmembrane</keyword>
<keyword id="KW-1133">Transmembrane helix</keyword>
<protein>
    <recommendedName>
        <fullName evidence="23">Adhesion G-protein coupled receptor G2</fullName>
    </recommendedName>
    <alternativeName>
        <fullName evidence="24">G-protein coupled receptor 64</fullName>
    </alternativeName>
    <alternativeName>
        <fullName evidence="25">Human epididymis-specific protein 6</fullName>
        <shortName evidence="25">He6</shortName>
    </alternativeName>
    <component>
        <recommendedName>
            <fullName evidence="26">Adhesion G-protein coupled receptor G2, N-terminal fragment</fullName>
            <shortName evidence="26">ADGRG2 N-terminal fragment</shortName>
        </recommendedName>
    </component>
    <component>
        <recommendedName>
            <fullName evidence="26">Adhesion G-protein coupled receptor G2, C-terminal fragment</fullName>
            <shortName evidence="26">ADGRG2 C-terminal fragment</shortName>
        </recommendedName>
    </component>
</protein>
<feature type="signal peptide" evidence="2">
    <location>
        <begin position="1"/>
        <end position="37"/>
    </location>
</feature>
<feature type="chain" id="PRO_0000012886" description="Adhesion G-protein coupled receptor G2">
    <location>
        <begin position="38"/>
        <end position="1017"/>
    </location>
</feature>
<feature type="chain" id="PRO_0000462373" description="Adhesion G-protein coupled receptor G2, N-terminal fragment" evidence="26">
    <location>
        <begin position="38"/>
        <end position="606"/>
    </location>
</feature>
<feature type="chain" id="PRO_0000462374" description="Adhesion G-protein coupled receptor G2, C-terminal fragment" evidence="26">
    <location>
        <begin position="607"/>
        <end position="1017"/>
    </location>
</feature>
<feature type="topological domain" description="Extracellular" evidence="26">
    <location>
        <begin position="38"/>
        <end position="627"/>
    </location>
</feature>
<feature type="transmembrane region" description="Helical; Name=1" evidence="2">
    <location>
        <begin position="628"/>
        <end position="648"/>
    </location>
</feature>
<feature type="topological domain" description="Cytoplasmic" evidence="26">
    <location>
        <begin position="649"/>
        <end position="667"/>
    </location>
</feature>
<feature type="transmembrane region" description="Helical; Name=2" evidence="2">
    <location>
        <begin position="668"/>
        <end position="688"/>
    </location>
</feature>
<feature type="topological domain" description="Extracellular" evidence="26">
    <location>
        <begin position="689"/>
        <end position="693"/>
    </location>
</feature>
<feature type="transmembrane region" description="Helical; Name=3" evidence="2">
    <location>
        <begin position="694"/>
        <end position="714"/>
    </location>
</feature>
<feature type="topological domain" description="Cytoplasmic" evidence="26">
    <location>
        <begin position="715"/>
        <end position="737"/>
    </location>
</feature>
<feature type="transmembrane region" description="Helical; Name=4" evidence="2">
    <location>
        <begin position="738"/>
        <end position="758"/>
    </location>
</feature>
<feature type="topological domain" description="Extracellular" evidence="26">
    <location>
        <begin position="759"/>
        <end position="789"/>
    </location>
</feature>
<feature type="transmembrane region" description="Helical; Name=5" evidence="2">
    <location>
        <begin position="790"/>
        <end position="810"/>
    </location>
</feature>
<feature type="topological domain" description="Cytoplasmic" evidence="26">
    <location>
        <begin position="811"/>
        <end position="834"/>
    </location>
</feature>
<feature type="transmembrane region" description="Helical; Name=6" evidence="2">
    <location>
        <begin position="835"/>
        <end position="855"/>
    </location>
</feature>
<feature type="topological domain" description="Extracellular" evidence="26">
    <location>
        <begin position="856"/>
        <end position="857"/>
    </location>
</feature>
<feature type="transmembrane region" description="Helical; Name=7" evidence="2">
    <location>
        <begin position="858"/>
        <end position="878"/>
    </location>
</feature>
<feature type="topological domain" description="Cytoplasmic" evidence="26">
    <location>
        <begin position="879"/>
        <end position="1017"/>
    </location>
</feature>
<feature type="domain" description="GAIN-B" evidence="3">
    <location>
        <begin position="462"/>
        <end position="619"/>
    </location>
</feature>
<feature type="region of interest" description="Disordered" evidence="4">
    <location>
        <begin position="301"/>
        <end position="366"/>
    </location>
</feature>
<feature type="region of interest" description="GPS" evidence="3">
    <location>
        <begin position="570"/>
        <end position="619"/>
    </location>
</feature>
<feature type="region of interest" description="Stachel" evidence="1">
    <location>
        <begin position="608"/>
        <end position="619"/>
    </location>
</feature>
<feature type="region of interest" description="Disordered" evidence="4">
    <location>
        <begin position="918"/>
        <end position="939"/>
    </location>
</feature>
<feature type="compositionally biased region" description="Low complexity" evidence="4">
    <location>
        <begin position="308"/>
        <end position="320"/>
    </location>
</feature>
<feature type="compositionally biased region" description="Polar residues" evidence="4">
    <location>
        <begin position="321"/>
        <end position="335"/>
    </location>
</feature>
<feature type="compositionally biased region" description="Polar residues" evidence="4">
    <location>
        <begin position="344"/>
        <end position="366"/>
    </location>
</feature>
<feature type="binding site" evidence="27">
    <location>
        <position position="868"/>
    </location>
    <ligand>
        <name>3beta-hydroxyandrost-5-en-17-one</name>
        <dbReference type="ChEBI" id="CHEBI:28689"/>
    </ligand>
</feature>
<feature type="site" description="Cleavage; by autolysis" evidence="3">
    <location>
        <begin position="606"/>
        <end position="607"/>
    </location>
</feature>
<feature type="modified residue" description="Phosphoserine" evidence="29 30">
    <location>
        <position position="1010"/>
    </location>
</feature>
<feature type="glycosylation site" description="N-linked (GlcNAc...) asparagine" evidence="2">
    <location>
        <position position="44"/>
    </location>
</feature>
<feature type="glycosylation site" description="N-linked (GlcNAc...) asparagine" evidence="2">
    <location>
        <position position="85"/>
    </location>
</feature>
<feature type="glycosylation site" description="N-linked (GlcNAc...) asparagine" evidence="2">
    <location>
        <position position="99"/>
    </location>
</feature>
<feature type="glycosylation site" description="N-linked (GlcNAc...) asparagine" evidence="2">
    <location>
        <position position="111"/>
    </location>
</feature>
<feature type="glycosylation site" description="N-linked (GlcNAc...) asparagine" evidence="2">
    <location>
        <position position="117"/>
    </location>
</feature>
<feature type="glycosylation site" description="N-linked (GlcNAc...) asparagine" evidence="2">
    <location>
        <position position="144"/>
    </location>
</feature>
<feature type="glycosylation site" description="N-linked (GlcNAc...) asparagine" evidence="2">
    <location>
        <position position="162"/>
    </location>
</feature>
<feature type="glycosylation site" description="N-linked (GlcNAc...) asparagine" evidence="2">
    <location>
        <position position="186"/>
    </location>
</feature>
<feature type="glycosylation site" description="N-linked (GlcNAc...) asparagine" evidence="2">
    <location>
        <position position="194"/>
    </location>
</feature>
<feature type="glycosylation site" description="N-linked (GlcNAc...) asparagine" evidence="2">
    <location>
        <position position="357"/>
    </location>
</feature>
<feature type="glycosylation site" description="N-linked (GlcNAc...) asparagine" evidence="2">
    <location>
        <position position="370"/>
    </location>
</feature>
<feature type="glycosylation site" description="N-linked (GlcNAc...) asparagine" evidence="2">
    <location>
        <position position="435"/>
    </location>
</feature>
<feature type="glycosylation site" description="N-linked (GlcNAc...) asparagine" evidence="2">
    <location>
        <position position="438"/>
    </location>
</feature>
<feature type="glycosylation site" description="N-linked (GlcNAc...) asparagine" evidence="2">
    <location>
        <position position="456"/>
    </location>
</feature>
<feature type="glycosylation site" description="N-linked (GlcNAc...) asparagine" evidence="2">
    <location>
        <position position="461"/>
    </location>
</feature>
<feature type="glycosylation site" description="N-linked (GlcNAc...) asparagine" evidence="2">
    <location>
        <position position="528"/>
    </location>
</feature>
<feature type="glycosylation site" description="N-linked (GlcNAc...) asparagine" evidence="2">
    <location>
        <position position="542"/>
    </location>
</feature>
<feature type="glycosylation site" description="N-linked (GlcNAc...) asparagine" evidence="2">
    <location>
        <position position="547"/>
    </location>
</feature>
<feature type="glycosylation site" description="N-linked (GlcNAc...) asparagine" evidence="2">
    <location>
        <position position="551"/>
    </location>
</feature>
<feature type="glycosylation site" description="N-linked (GlcNAc...) asparagine" evidence="2">
    <location>
        <position position="597"/>
    </location>
</feature>
<feature type="glycosylation site" description="N-linked (GlcNAc...) asparagine" evidence="2">
    <location>
        <position position="857"/>
    </location>
</feature>
<feature type="disulfide bond" evidence="3">
    <location>
        <begin position="570"/>
        <end position="601"/>
    </location>
</feature>
<feature type="disulfide bond" evidence="3">
    <location>
        <begin position="589"/>
        <end position="603"/>
    </location>
</feature>
<feature type="disulfide bond" evidence="1">
    <location>
        <begin position="694"/>
        <end position="778"/>
    </location>
</feature>
<feature type="splice variant" id="VSP_009792" description="In isoform 3 and isoform 10." evidence="21 22">
    <location>
        <begin position="51"/>
        <end position="66"/>
    </location>
</feature>
<feature type="splice variant" id="VSP_009796" description="In isoform 7." evidence="21">
    <original>AKLSVVSFAPSSNGTPEVETTSLNDVTLSLLPSNETEKTKITIVKTFNAS</original>
    <variation>EVETTSLNDVTLSLLPSNET</variation>
    <location>
        <begin position="52"/>
        <end position="101"/>
    </location>
</feature>
<feature type="splice variant" id="VSP_009797" description="In isoform 8." evidence="21">
    <original>AKLSVVSFAPSSNGTPEVETTSLNDVTLSLLPSNETEKTKITIVKTFNAS</original>
    <variation>DVTLSLLPSNET</variation>
    <location>
        <begin position="52"/>
        <end position="101"/>
    </location>
</feature>
<feature type="splice variant" id="VSP_009794" description="In isoform 5." evidence="21">
    <location>
        <begin position="52"/>
        <end position="75"/>
    </location>
</feature>
<feature type="splice variant" id="VSP_009791" description="In isoform 2." evidence="25">
    <location>
        <begin position="65"/>
        <end position="67"/>
    </location>
</feature>
<feature type="splice variant" id="VSP_009795" description="In isoform 6." evidence="21">
    <original>EVETTSLNDVTLSLLPSNETEKTKITIVKTFNAS</original>
    <variation>DVTLSLLPSNET</variation>
    <location>
        <begin position="68"/>
        <end position="101"/>
    </location>
</feature>
<feature type="splice variant" id="VSP_009793" description="In isoform 4 and isoform 10." evidence="21 22">
    <location>
        <begin position="88"/>
        <end position="101"/>
    </location>
</feature>
<feature type="splice variant" id="VSP_054522" description="In isoform 10." evidence="22">
    <location>
        <begin position="474"/>
        <end position="562"/>
    </location>
</feature>
<feature type="splice variant" id="VSP_009798" description="In isoform 9." evidence="21">
    <location>
        <begin position="906"/>
        <end position="956"/>
    </location>
</feature>
<feature type="sequence variant" id="VAR_090391" description="In CBAVDX; the protein is undetectable." evidence="14">
    <location>
        <begin position="40"/>
        <end position="1017"/>
    </location>
</feature>
<feature type="sequence variant" id="VAR_080773" description="Found in a family with intellectual disability; uncertain significance; dbSNP:rs746638813." evidence="10">
    <original>N</original>
    <variation>S</variation>
    <location>
        <position position="64"/>
    </location>
</feature>
<feature type="sequence variant" id="VAR_090392" description="In CBAVDX; uncertain significance." evidence="13">
    <location>
        <begin position="84"/>
        <end position="1017"/>
    </location>
</feature>
<feature type="sequence variant" id="VAR_076259" description="In dbSNP:rs140334931." evidence="7">
    <original>P</original>
    <variation>S</variation>
    <location>
        <position position="224"/>
    </location>
</feature>
<feature type="sequence variant" id="VAR_055289" description="In dbSNP:rs35974297.">
    <original>H</original>
    <variation>Q</variation>
    <location>
        <position position="290"/>
    </location>
</feature>
<feature type="sequence variant" id="VAR_090393" description="In CBAVDX; uncertain significance." evidence="18">
    <location>
        <begin position="303"/>
        <end position="1017"/>
    </location>
</feature>
<feature type="sequence variant" id="VAR_055290" description="In dbSNP:rs3924227.">
    <original>N</original>
    <variation>S</variation>
    <location>
        <position position="771"/>
    </location>
</feature>
<feature type="sequence variant" id="VAR_090394" description="In CBAVDX; likely pathogenic." evidence="12">
    <location>
        <begin position="814"/>
        <end position="1017"/>
    </location>
</feature>
<feature type="sequence variant" id="VAR_090395" description="In CBAVDX; uncertain significance." evidence="13">
    <location>
        <begin position="825"/>
        <end position="1017"/>
    </location>
</feature>
<feature type="mutagenesis site" description="Decreased activation by dehydroepiandrosterone." evidence="19">
    <original>F</original>
    <variation>A</variation>
    <location>
        <position position="679"/>
    </location>
</feature>
<feature type="mutagenesis site" description="Decreased activation by dehydroepiandrosterone." evidence="19">
    <original>L</original>
    <variation>A</variation>
    <location>
        <position position="705"/>
    </location>
</feature>
<feature type="mutagenesis site" description="Impaired ability to activate G-alpha protein G(s) without affecting ability to activate G(q)." evidence="11">
    <original>Y</original>
    <variation>A</variation>
    <location>
        <position position="720"/>
    </location>
</feature>
<feature type="mutagenesis site" description="Impaired ability to activate G-alpha protein G(s) without affecting ability to activate G(q)." evidence="11">
    <original>F</original>
    <variation>A</variation>
    <location>
        <position position="727"/>
    </location>
</feature>
<feature type="mutagenesis site" description="Impaired ability to activate G-alpha protein G(q) without affecting ability to activate G(s)." evidence="11">
    <original>Y</original>
    <variation>A</variation>
    <location>
        <position position="730"/>
    </location>
</feature>
<feature type="mutagenesis site" description="Accelerated degradation; reduced expression to the cell surface; reduced ability to activate G-alpha G(s)." evidence="16">
    <original>WI</original>
    <variation>AA</variation>
    <location>
        <begin position="779"/>
        <end position="780"/>
    </location>
</feature>
<feature type="mutagenesis site" description="Accelerated degradation; reduced expression to the cell surface; reduced ability to activate G-alpha G(s)." evidence="16">
    <original>W</original>
    <variation>A</variation>
    <location>
        <position position="779"/>
    </location>
</feature>
<feature type="mutagenesis site" description="Accelerated degradation; reduced expression to the cell surface; reduced ability to activate G-alpha G(s)." evidence="16">
    <original>I</original>
    <variation>A</variation>
    <location>
        <position position="780"/>
    </location>
</feature>
<feature type="mutagenesis site" description="Increased ability to activate G-proteins." evidence="15">
    <original>F</original>
    <variation>A</variation>
    <location>
        <position position="786"/>
    </location>
</feature>
<feature type="mutagenesis site" description="Increased ability to activate G-proteins." evidence="15">
    <original>Y</original>
    <variation>A</variation>
    <location>
        <position position="787"/>
    </location>
</feature>
<feature type="mutagenesis site" description="Decreased ability to activate G-proteins." evidence="15">
    <original>V</original>
    <variation>A</variation>
    <location>
        <position position="790"/>
    </location>
</feature>
<feature type="mutagenesis site" description="Decreased ability to activate G-proteins." evidence="15">
    <original>F</original>
    <variation>A</variation>
    <location>
        <position position="794"/>
    </location>
</feature>
<feature type="mutagenesis site" description="Impaired ability to activate G-alpha protein G(q) without affecting ability to activate G(s)." evidence="11">
    <original>RK</original>
    <variation>EE</variation>
    <location>
        <begin position="825"/>
        <end position="826"/>
    </location>
</feature>
<feature type="mutagenesis site" description="Decreased activation by dehydroepiandrosterone." evidence="19">
    <original>W</original>
    <variation>A</variation>
    <location>
        <position position="846"/>
    </location>
</feature>
<feature type="mutagenesis site" description="Decreased activation by dehydroepiandrosterone." evidence="19">
    <original>F</original>
    <variation>M</variation>
    <location>
        <position position="864"/>
    </location>
</feature>
<feature type="mutagenesis site" description="Decreased activation by dehydroepiandrosterone." evidence="19">
    <original>N</original>
    <variation>A</variation>
    <location>
        <position position="868"/>
    </location>
</feature>
<feature type="sequence conflict" description="In Ref. 1; CAA57479 and 2; AAN33056/AAN33064/AAN33065/AAN38971/AAN38972/AAN38973/AAN38974/AAN75702." evidence="26" ref="1 2">
    <original>V</original>
    <variation>A</variation>
    <location>
        <position position="202"/>
    </location>
</feature>
<feature type="sequence conflict" description="In Ref. 1; CAA57479 and 2; AAN33056/AAN33064/AAN33065/AAN38971/AAN38972/AAN38973/AAN38974/AAN75702." evidence="26" ref="1 2">
    <original>E</original>
    <variation>G</variation>
    <location>
        <position position="233"/>
    </location>
</feature>
<gene>
    <name evidence="23 28" type="primary">ADGRG2</name>
    <name evidence="24" type="synonym">GPR64</name>
    <name evidence="25" type="synonym">HE6</name>
    <name type="synonym">TM7LN2</name>
</gene>
<accession>Q8IZP9</accession>
<accession>B1AWB3</accession>
<accession>B1AWB4</accession>
<accession>B1AWB6</accession>
<accession>B1AWB7</accession>
<accession>O00406</accession>
<accession>Q14CE0</accession>
<accession>Q8IWT2</accession>
<accession>Q8IZE4</accession>
<accession>Q8IZE5</accession>
<accession>Q8IZE6</accession>
<accession>Q8IZE7</accession>
<accession>Q8IZP3</accession>
<accession>Q8IZP4</accession>
<sequence length="1017" mass="111593">MVFSVRQCGHVGRTEEVLLTFKIFLVIICLHVVLVTSLEEDTDNSSLSPPPAKLSVVSFAPSSNGTPEVETTSLNDVTLSLLPSNETEKTKITIVKTFNASGVKPQRNICNLSSICNDSAFFRGEIMFQYDKESTVPQNQHITNGTLTGVLSLSELKRSELNKTLQTLSETYFIMCATAEAQSTLNCTFTIKLNNTMNACAVIAALERVKIRPMEHCCCSVRIPCPSSPEELEKLQCDLQDPIVCLADHPRGPPFSSSQSIPVVPRATVLSQVPKATSFAEPPDYSPVTHNVPSPIGEIQPLSPQPSAPIASSPAIDMPPQSETISSPMPQTHVSGTPPPVKASFSSPTVSAPANVNTTSAPPVQTDIVNTSSISDLENQVLQMEKALSLGSLEPNLAGEMINQVSRLLHSPPDMLAPLAQRLLKVVDDIGLQLNFSNTTISLTSPSLALAVIRVNASSFNTTTFVAQDPANLQVSLETQAPENSIGTITLPSSLMNNLPAHDMELASRVQFNFFETPALFQDPSLENLSLISYVISSSVANLTVRNLTRNVTVTLKHINPSQDELTVRCVFWDLGRNGGRGGWSDNGCSVKDRRLNETICTCSHLTSFGVLLDLSRTSVLPAQMMALTFITYIGCGLSSIFLSVTLVTYIAFEKIRRDYPSKILIQLCAALLLLNLVFLLDSWIALYKMQGLCISVAVFLHYFLLVSFTWMGLEAFHMYLALVKVFNTYIRKYILKFCIVGWGVPAVVVTIILTISPDNYGLGSYGKFPNGSPDDFCWINNNAVFYITVVGYFCVIFLLNVSMFIVVLVQLCRIKKKKQLGAQRKTSIQDLRSIAGLTFLLGITWGFAFFAWGPVNVTFMYLFAIFNTLQGFFIFIFYCVAKENVRKQWRRYLCCGKLRLAENSDWSKTATNGLKKQTVNQGVSSSSNSLQSSSNSTNSTTLLVNNDCSVHASGNGNASTERNGVSFSVQNGDVCLHDFTGKQHMFNEKEDSCNGKGRMALRRTSKRGSLHFIEQM</sequence>
<dbReference type="EMBL" id="X81892">
    <property type="protein sequence ID" value="CAA57479.1"/>
    <property type="molecule type" value="mRNA"/>
</dbReference>
<dbReference type="EMBL" id="AF538954">
    <property type="protein sequence ID" value="AAN33056.1"/>
    <property type="molecule type" value="mRNA"/>
</dbReference>
<dbReference type="EMBL" id="AF539455">
    <property type="protein sequence ID" value="AAN33064.1"/>
    <property type="molecule type" value="mRNA"/>
</dbReference>
<dbReference type="EMBL" id="AF539456">
    <property type="protein sequence ID" value="AAN33065.1"/>
    <property type="molecule type" value="mRNA"/>
</dbReference>
<dbReference type="EMBL" id="AY143364">
    <property type="protein sequence ID" value="AAN38971.1"/>
    <property type="molecule type" value="mRNA"/>
</dbReference>
<dbReference type="EMBL" id="AY143365">
    <property type="protein sequence ID" value="AAN38972.1"/>
    <property type="molecule type" value="mRNA"/>
</dbReference>
<dbReference type="EMBL" id="AY143366">
    <property type="protein sequence ID" value="AAN38973.1"/>
    <property type="molecule type" value="mRNA"/>
</dbReference>
<dbReference type="EMBL" id="AY143367">
    <property type="protein sequence ID" value="AAN38974.1"/>
    <property type="molecule type" value="mRNA"/>
</dbReference>
<dbReference type="EMBL" id="AY148343">
    <property type="protein sequence ID" value="AAN75702.1"/>
    <property type="molecule type" value="mRNA"/>
</dbReference>
<dbReference type="EMBL" id="AL732509">
    <property type="status" value="NOT_ANNOTATED_CDS"/>
    <property type="molecule type" value="Genomic_DNA"/>
</dbReference>
<dbReference type="EMBL" id="AL732578">
    <property type="status" value="NOT_ANNOTATED_CDS"/>
    <property type="molecule type" value="Genomic_DNA"/>
</dbReference>
<dbReference type="EMBL" id="BC113979">
    <property type="protein sequence ID" value="AAI13980.1"/>
    <property type="molecule type" value="mRNA"/>
</dbReference>
<dbReference type="CCDS" id="CCDS14191.1">
    <molecule id="Q8IZP9-2"/>
</dbReference>
<dbReference type="CCDS" id="CCDS43921.1">
    <molecule id="Q8IZP9-6"/>
</dbReference>
<dbReference type="CCDS" id="CCDS43922.1">
    <molecule id="Q8IZP9-4"/>
</dbReference>
<dbReference type="CCDS" id="CCDS43923.1">
    <molecule id="Q8IZP9-1"/>
</dbReference>
<dbReference type="CCDS" id="CCDS55376.1">
    <molecule id="Q8IZP9-5"/>
</dbReference>
<dbReference type="CCDS" id="CCDS55377.1">
    <molecule id="Q8IZP9-7"/>
</dbReference>
<dbReference type="CCDS" id="CCDS55378.1">
    <molecule id="Q8IZP9-3"/>
</dbReference>
<dbReference type="CCDS" id="CCDS55379.1">
    <molecule id="Q8IZP9-9"/>
</dbReference>
<dbReference type="RefSeq" id="NP_001073327.1">
    <molecule id="Q8IZP9-1"/>
    <property type="nucleotide sequence ID" value="NM_001079858.3"/>
</dbReference>
<dbReference type="RefSeq" id="NP_001073328.1">
    <molecule id="Q8IZP9-4"/>
    <property type="nucleotide sequence ID" value="NM_001079859.3"/>
</dbReference>
<dbReference type="RefSeq" id="NP_001073329.1">
    <molecule id="Q8IZP9-6"/>
    <property type="nucleotide sequence ID" value="NM_001079860.3"/>
</dbReference>
<dbReference type="RefSeq" id="NP_001171762.1">
    <molecule id="Q8IZP9-3"/>
    <property type="nucleotide sequence ID" value="NM_001184833.2"/>
</dbReference>
<dbReference type="RefSeq" id="NP_001171763.1">
    <molecule id="Q8IZP9-9"/>
    <property type="nucleotide sequence ID" value="NM_001184834.2"/>
</dbReference>
<dbReference type="RefSeq" id="NP_001171764.1">
    <molecule id="Q8IZP9-8"/>
    <property type="nucleotide sequence ID" value="NM_001184835.2"/>
</dbReference>
<dbReference type="RefSeq" id="NP_001171765.1">
    <molecule id="Q8IZP9-5"/>
    <property type="nucleotide sequence ID" value="NM_001184836.2"/>
</dbReference>
<dbReference type="RefSeq" id="NP_001171766.1">
    <molecule id="Q8IZP9-7"/>
    <property type="nucleotide sequence ID" value="NM_001184837.2"/>
</dbReference>
<dbReference type="RefSeq" id="NP_005747.2">
    <molecule id="Q8IZP9-2"/>
    <property type="nucleotide sequence ID" value="NM_005756.4"/>
</dbReference>
<dbReference type="RefSeq" id="XP_006724518.1">
    <molecule id="Q8IZP9-1"/>
    <property type="nucleotide sequence ID" value="XM_006724455.3"/>
</dbReference>
<dbReference type="RefSeq" id="XP_011543736.1">
    <molecule id="Q8IZP9-1"/>
    <property type="nucleotide sequence ID" value="XM_011545434.2"/>
</dbReference>
<dbReference type="RefSeq" id="XP_011543737.1">
    <molecule id="Q8IZP9-1"/>
    <property type="nucleotide sequence ID" value="XM_011545435.3"/>
</dbReference>
<dbReference type="RefSeq" id="XP_047297712.1">
    <molecule id="Q8IZP9-5"/>
    <property type="nucleotide sequence ID" value="XM_047441756.1"/>
</dbReference>
<dbReference type="RefSeq" id="XP_054182313.1">
    <molecule id="Q8IZP9-1"/>
    <property type="nucleotide sequence ID" value="XM_054326338.1"/>
</dbReference>
<dbReference type="RefSeq" id="XP_054182314.1">
    <molecule id="Q8IZP9-1"/>
    <property type="nucleotide sequence ID" value="XM_054326339.1"/>
</dbReference>
<dbReference type="RefSeq" id="XP_054182315.1">
    <molecule id="Q8IZP9-5"/>
    <property type="nucleotide sequence ID" value="XM_054326340.1"/>
</dbReference>
<dbReference type="RefSeq" id="XP_054182317.1">
    <molecule id="Q8IZP9-1"/>
    <property type="nucleotide sequence ID" value="XM_054326342.1"/>
</dbReference>
<dbReference type="SMR" id="Q8IZP9"/>
<dbReference type="BioGRID" id="115451">
    <property type="interactions" value="11"/>
</dbReference>
<dbReference type="FunCoup" id="Q8IZP9">
    <property type="interactions" value="69"/>
</dbReference>
<dbReference type="IntAct" id="Q8IZP9">
    <property type="interactions" value="11"/>
</dbReference>
<dbReference type="STRING" id="9606.ENSP00000369198"/>
<dbReference type="ChEMBL" id="CHEMBL4523893"/>
<dbReference type="MEROPS" id="P02.007"/>
<dbReference type="TCDB" id="9.A.14.6.10">
    <property type="family name" value="the g-protein-coupled receptor (gpcr) family"/>
</dbReference>
<dbReference type="GlyCosmos" id="Q8IZP9">
    <property type="glycosylation" value="21 sites, No reported glycans"/>
</dbReference>
<dbReference type="GlyGen" id="Q8IZP9">
    <property type="glycosylation" value="25 sites, 5 N-linked glycans (6 sites), 1 O-linked glycan (4 sites)"/>
</dbReference>
<dbReference type="iPTMnet" id="Q8IZP9"/>
<dbReference type="PhosphoSitePlus" id="Q8IZP9"/>
<dbReference type="BioMuta" id="ADGRG2"/>
<dbReference type="DMDM" id="229462874"/>
<dbReference type="jPOST" id="Q8IZP9"/>
<dbReference type="MassIVE" id="Q8IZP9"/>
<dbReference type="PaxDb" id="9606-ENSP00000369198"/>
<dbReference type="PeptideAtlas" id="Q8IZP9"/>
<dbReference type="ProteomicsDB" id="60325"/>
<dbReference type="ProteomicsDB" id="71395">
    <molecule id="Q8IZP9-1"/>
</dbReference>
<dbReference type="ProteomicsDB" id="71396">
    <molecule id="Q8IZP9-2"/>
</dbReference>
<dbReference type="ProteomicsDB" id="71397">
    <molecule id="Q8IZP9-3"/>
</dbReference>
<dbReference type="ProteomicsDB" id="71398">
    <molecule id="Q8IZP9-4"/>
</dbReference>
<dbReference type="ProteomicsDB" id="71399">
    <molecule id="Q8IZP9-5"/>
</dbReference>
<dbReference type="ProteomicsDB" id="71400">
    <molecule id="Q8IZP9-6"/>
</dbReference>
<dbReference type="ProteomicsDB" id="71401">
    <molecule id="Q8IZP9-7"/>
</dbReference>
<dbReference type="ProteomicsDB" id="71402">
    <molecule id="Q8IZP9-8"/>
</dbReference>
<dbReference type="ProteomicsDB" id="71403">
    <molecule id="Q8IZP9-9"/>
</dbReference>
<dbReference type="Pumba" id="Q8IZP9"/>
<dbReference type="Antibodypedia" id="473">
    <property type="antibodies" value="138 antibodies from 26 providers"/>
</dbReference>
<dbReference type="DNASU" id="10149"/>
<dbReference type="Ensembl" id="ENST00000340581.3">
    <molecule id="Q8IZP9-10"/>
    <property type="protein sequence ID" value="ENSP00000344972.3"/>
    <property type="gene ID" value="ENSG00000173698.18"/>
</dbReference>
<dbReference type="Ensembl" id="ENST00000354791.7">
    <molecule id="Q8IZP9-10"/>
    <property type="protein sequence ID" value="ENSP00000346845.4"/>
    <property type="gene ID" value="ENSG00000173698.18"/>
</dbReference>
<dbReference type="Ensembl" id="ENST00000356606.8">
    <molecule id="Q8IZP9-4"/>
    <property type="protein sequence ID" value="ENSP00000349015.4"/>
    <property type="gene ID" value="ENSG00000173698.18"/>
</dbReference>
<dbReference type="Ensembl" id="ENST00000357544.7">
    <molecule id="Q8IZP9-7"/>
    <property type="protein sequence ID" value="ENSP00000350152.3"/>
    <property type="gene ID" value="ENSG00000173698.18"/>
</dbReference>
<dbReference type="Ensembl" id="ENST00000357991.7">
    <molecule id="Q8IZP9-2"/>
    <property type="protein sequence ID" value="ENSP00000350680.3"/>
    <property type="gene ID" value="ENSG00000173698.18"/>
</dbReference>
<dbReference type="Ensembl" id="ENST00000360279.8">
    <molecule id="Q8IZP9-6"/>
    <property type="protein sequence ID" value="ENSP00000353421.4"/>
    <property type="gene ID" value="ENSG00000173698.18"/>
</dbReference>
<dbReference type="Ensembl" id="ENST00000379869.8">
    <molecule id="Q8IZP9-1"/>
    <property type="protein sequence ID" value="ENSP00000369198.3"/>
    <property type="gene ID" value="ENSG00000173698.18"/>
</dbReference>
<dbReference type="Ensembl" id="ENST00000379873.6">
    <molecule id="Q8IZP9-9"/>
    <property type="protein sequence ID" value="ENSP00000369202.2"/>
    <property type="gene ID" value="ENSG00000173698.18"/>
</dbReference>
<dbReference type="Ensembl" id="ENST00000379876.5">
    <molecule id="Q8IZP9-5"/>
    <property type="protein sequence ID" value="ENSP00000369205.1"/>
    <property type="gene ID" value="ENSG00000173698.18"/>
</dbReference>
<dbReference type="Ensembl" id="ENST00000379878.7">
    <molecule id="Q8IZP9-3"/>
    <property type="protein sequence ID" value="ENSP00000369207.3"/>
    <property type="gene ID" value="ENSG00000173698.18"/>
</dbReference>
<dbReference type="GeneID" id="10149"/>
<dbReference type="KEGG" id="hsa:10149"/>
<dbReference type="MANE-Select" id="ENST00000379869.8">
    <property type="protein sequence ID" value="ENSP00000369198.3"/>
    <property type="RefSeq nucleotide sequence ID" value="NM_001079858.3"/>
    <property type="RefSeq protein sequence ID" value="NP_001073327.1"/>
</dbReference>
<dbReference type="UCSC" id="uc004cyx.4">
    <molecule id="Q8IZP9-1"/>
    <property type="organism name" value="human"/>
</dbReference>
<dbReference type="AGR" id="HGNC:4516"/>
<dbReference type="CTD" id="10149"/>
<dbReference type="DisGeNET" id="10149"/>
<dbReference type="GeneCards" id="ADGRG2"/>
<dbReference type="HGNC" id="HGNC:4516">
    <property type="gene designation" value="ADGRG2"/>
</dbReference>
<dbReference type="HPA" id="ENSG00000173698">
    <property type="expression patterns" value="Tissue enriched (epididymis)"/>
</dbReference>
<dbReference type="MalaCards" id="ADGRG2"/>
<dbReference type="MIM" id="300572">
    <property type="type" value="gene"/>
</dbReference>
<dbReference type="MIM" id="300985">
    <property type="type" value="phenotype"/>
</dbReference>
<dbReference type="neXtProt" id="NX_Q8IZP9"/>
<dbReference type="OpenTargets" id="ENSG00000173698"/>
<dbReference type="Orphanet" id="48">
    <property type="disease" value="Congenital bilateral absence of vas deferens"/>
</dbReference>
<dbReference type="PharmGKB" id="PA28908"/>
<dbReference type="VEuPathDB" id="HostDB:ENSG00000173698"/>
<dbReference type="eggNOG" id="KOG4193">
    <property type="taxonomic scope" value="Eukaryota"/>
</dbReference>
<dbReference type="GeneTree" id="ENSGT00940000156341"/>
<dbReference type="HOGENOM" id="CLU_002753_3_3_1"/>
<dbReference type="InParanoid" id="Q8IZP9"/>
<dbReference type="OMA" id="RIWLFGN"/>
<dbReference type="OrthoDB" id="10037534at2759"/>
<dbReference type="PAN-GO" id="Q8IZP9">
    <property type="GO annotations" value="3 GO annotations based on evolutionary models"/>
</dbReference>
<dbReference type="PhylomeDB" id="Q8IZP9"/>
<dbReference type="TreeFam" id="TF321769"/>
<dbReference type="PathwayCommons" id="Q8IZP9"/>
<dbReference type="BioGRID-ORCS" id="10149">
    <property type="hits" value="6 hits in 766 CRISPR screens"/>
</dbReference>
<dbReference type="ChiTaRS" id="ADGRG2">
    <property type="organism name" value="human"/>
</dbReference>
<dbReference type="GeneWiki" id="GPR64"/>
<dbReference type="GenomeRNAi" id="10149"/>
<dbReference type="Pharos" id="Q8IZP9">
    <property type="development level" value="Tbio"/>
</dbReference>
<dbReference type="PRO" id="PR:Q8IZP9"/>
<dbReference type="Proteomes" id="UP000005640">
    <property type="component" value="Chromosome X"/>
</dbReference>
<dbReference type="RNAct" id="Q8IZP9">
    <property type="molecule type" value="protein"/>
</dbReference>
<dbReference type="Bgee" id="ENSG00000173698">
    <property type="expression patterns" value="Expressed in corpus epididymis and 124 other cell types or tissues"/>
</dbReference>
<dbReference type="GO" id="GO:0016324">
    <property type="term" value="C:apical plasma membrane"/>
    <property type="evidence" value="ECO:0000314"/>
    <property type="project" value="UniProtKB"/>
</dbReference>
<dbReference type="GO" id="GO:0009986">
    <property type="term" value="C:cell surface"/>
    <property type="evidence" value="ECO:0007005"/>
    <property type="project" value="UniProtKB"/>
</dbReference>
<dbReference type="GO" id="GO:0005829">
    <property type="term" value="C:cytosol"/>
    <property type="evidence" value="ECO:0000314"/>
    <property type="project" value="HPA"/>
</dbReference>
<dbReference type="GO" id="GO:0070062">
    <property type="term" value="C:extracellular exosome"/>
    <property type="evidence" value="ECO:0007005"/>
    <property type="project" value="UniProtKB"/>
</dbReference>
<dbReference type="GO" id="GO:0016020">
    <property type="term" value="C:membrane"/>
    <property type="evidence" value="ECO:0000304"/>
    <property type="project" value="GDB"/>
</dbReference>
<dbReference type="GO" id="GO:0005886">
    <property type="term" value="C:plasma membrane"/>
    <property type="evidence" value="ECO:0000314"/>
    <property type="project" value="HPA"/>
</dbReference>
<dbReference type="GO" id="GO:0004930">
    <property type="term" value="F:G protein-coupled receptor activity"/>
    <property type="evidence" value="ECO:0000314"/>
    <property type="project" value="UniProtKB"/>
</dbReference>
<dbReference type="GO" id="GO:0007189">
    <property type="term" value="P:adenylate cyclase-activating G protein-coupled receptor signaling pathway"/>
    <property type="evidence" value="ECO:0000314"/>
    <property type="project" value="UniProtKB"/>
</dbReference>
<dbReference type="GO" id="GO:0007166">
    <property type="term" value="P:cell surface receptor signaling pathway"/>
    <property type="evidence" value="ECO:0007669"/>
    <property type="project" value="InterPro"/>
</dbReference>
<dbReference type="GO" id="GO:0007186">
    <property type="term" value="P:G protein-coupled receptor signaling pathway"/>
    <property type="evidence" value="ECO:0000304"/>
    <property type="project" value="ProtInc"/>
</dbReference>
<dbReference type="GO" id="GO:0007200">
    <property type="term" value="P:phospholipase C-activating G protein-coupled receptor signaling pathway"/>
    <property type="evidence" value="ECO:0000314"/>
    <property type="project" value="UniProtKB"/>
</dbReference>
<dbReference type="GO" id="GO:0007286">
    <property type="term" value="P:spermatid development"/>
    <property type="evidence" value="ECO:0000314"/>
    <property type="project" value="UniProtKB"/>
</dbReference>
<dbReference type="GO" id="GO:0007283">
    <property type="term" value="P:spermatogenesis"/>
    <property type="evidence" value="ECO:0000304"/>
    <property type="project" value="ProtInc"/>
</dbReference>
<dbReference type="CDD" id="cd15444">
    <property type="entry name" value="7tmB2_GPR64"/>
    <property type="match status" value="1"/>
</dbReference>
<dbReference type="FunFam" id="1.20.1070.10:FF:000043">
    <property type="entry name" value="adhesion G-protein coupled receptor G2 isoform X1"/>
    <property type="match status" value="1"/>
</dbReference>
<dbReference type="FunFam" id="2.60.220.50:FF:000003">
    <property type="entry name" value="adhesion G-protein coupled receptor G2 isoform X2"/>
    <property type="match status" value="1"/>
</dbReference>
<dbReference type="Gene3D" id="2.60.220.50">
    <property type="match status" value="1"/>
</dbReference>
<dbReference type="Gene3D" id="1.20.1070.10">
    <property type="entry name" value="Rhodopsin 7-helix transmembrane proteins"/>
    <property type="match status" value="1"/>
</dbReference>
<dbReference type="InterPro" id="IPR057244">
    <property type="entry name" value="GAIN_B"/>
</dbReference>
<dbReference type="InterPro" id="IPR046338">
    <property type="entry name" value="GAIN_dom_sf"/>
</dbReference>
<dbReference type="InterPro" id="IPR017981">
    <property type="entry name" value="GPCR_2-like_7TM"/>
</dbReference>
<dbReference type="InterPro" id="IPR000832">
    <property type="entry name" value="GPCR_2_secretin-like"/>
</dbReference>
<dbReference type="InterPro" id="IPR017983">
    <property type="entry name" value="GPCR_2_secretin-like_CS"/>
</dbReference>
<dbReference type="InterPro" id="IPR000203">
    <property type="entry name" value="GPS"/>
</dbReference>
<dbReference type="PANTHER" id="PTHR12011">
    <property type="entry name" value="ADHESION G-PROTEIN COUPLED RECEPTOR"/>
    <property type="match status" value="1"/>
</dbReference>
<dbReference type="PANTHER" id="PTHR12011:SF264">
    <property type="entry name" value="ADHESION G-PROTEIN COUPLED RECEPTOR G2"/>
    <property type="match status" value="1"/>
</dbReference>
<dbReference type="Pfam" id="PF00002">
    <property type="entry name" value="7tm_2"/>
    <property type="match status" value="1"/>
</dbReference>
<dbReference type="Pfam" id="PF01825">
    <property type="entry name" value="GPS"/>
    <property type="match status" value="1"/>
</dbReference>
<dbReference type="PRINTS" id="PR00249">
    <property type="entry name" value="GPCRSECRETIN"/>
</dbReference>
<dbReference type="SMART" id="SM00303">
    <property type="entry name" value="GPS"/>
    <property type="match status" value="1"/>
</dbReference>
<dbReference type="SUPFAM" id="SSF81321">
    <property type="entry name" value="Family A G protein-coupled receptor-like"/>
    <property type="match status" value="1"/>
</dbReference>
<dbReference type="PROSITE" id="PS00650">
    <property type="entry name" value="G_PROTEIN_RECEP_F2_2"/>
    <property type="match status" value="1"/>
</dbReference>
<dbReference type="PROSITE" id="PS50261">
    <property type="entry name" value="G_PROTEIN_RECEP_F2_4"/>
    <property type="match status" value="1"/>
</dbReference>
<dbReference type="PROSITE" id="PS50221">
    <property type="entry name" value="GAIN_B"/>
    <property type="match status" value="1"/>
</dbReference>
<reference key="1">
    <citation type="journal article" date="1997" name="DNA Cell Biol.">
        <title>Cloning of a human epididymis-specific mRNA, HE6, encoding a novel member of the seven transmembrane-domain receptor superfamily.</title>
        <authorList>
            <person name="Osterhoff C."/>
            <person name="Ivell R."/>
            <person name="Kirchhoff C."/>
        </authorList>
    </citation>
    <scope>NUCLEOTIDE SEQUENCE [MRNA] (ISOFORM 2)</scope>
    <scope>TISSUE SPECIFICITY</scope>
    <source>
        <tissue>Epididymis</tissue>
    </source>
</reference>
<reference key="2">
    <citation type="journal article" date="2003" name="Mol. Reprod. Dev.">
        <title>HE6, a two-subunit heptahelical receptor associated with apical membranes of efferent and epididymal duct epithelia.</title>
        <authorList>
            <person name="Obermann H."/>
            <person name="Samalecos A."/>
            <person name="Osterhoff C."/>
            <person name="Schroeder B."/>
            <person name="Heller R."/>
            <person name="Kirchhoff C."/>
        </authorList>
    </citation>
    <scope>NUCLEOTIDE SEQUENCE [MRNA] (ISOFORMS 1; 3; 4; 5; 6; 7; 8 AND 9)</scope>
    <scope>TISSUE SPECIFICITY</scope>
    <scope>GLYCOSYLATION</scope>
    <scope>SUBCELLULAR LOCATION</scope>
    <source>
        <tissue>Epididymis</tissue>
    </source>
</reference>
<reference key="3">
    <citation type="journal article" date="2005" name="Nature">
        <title>The DNA sequence of the human X chromosome.</title>
        <authorList>
            <person name="Ross M.T."/>
            <person name="Grafham D.V."/>
            <person name="Coffey A.J."/>
            <person name="Scherer S."/>
            <person name="McLay K."/>
            <person name="Muzny D."/>
            <person name="Platzer M."/>
            <person name="Howell G.R."/>
            <person name="Burrows C."/>
            <person name="Bird C.P."/>
            <person name="Frankish A."/>
            <person name="Lovell F.L."/>
            <person name="Howe K.L."/>
            <person name="Ashurst J.L."/>
            <person name="Fulton R.S."/>
            <person name="Sudbrak R."/>
            <person name="Wen G."/>
            <person name="Jones M.C."/>
            <person name="Hurles M.E."/>
            <person name="Andrews T.D."/>
            <person name="Scott C.E."/>
            <person name="Searle S."/>
            <person name="Ramser J."/>
            <person name="Whittaker A."/>
            <person name="Deadman R."/>
            <person name="Carter N.P."/>
            <person name="Hunt S.E."/>
            <person name="Chen R."/>
            <person name="Cree A."/>
            <person name="Gunaratne P."/>
            <person name="Havlak P."/>
            <person name="Hodgson A."/>
            <person name="Metzker M.L."/>
            <person name="Richards S."/>
            <person name="Scott G."/>
            <person name="Steffen D."/>
            <person name="Sodergren E."/>
            <person name="Wheeler D.A."/>
            <person name="Worley K.C."/>
            <person name="Ainscough R."/>
            <person name="Ambrose K.D."/>
            <person name="Ansari-Lari M.A."/>
            <person name="Aradhya S."/>
            <person name="Ashwell R.I."/>
            <person name="Babbage A.K."/>
            <person name="Bagguley C.L."/>
            <person name="Ballabio A."/>
            <person name="Banerjee R."/>
            <person name="Barker G.E."/>
            <person name="Barlow K.F."/>
            <person name="Barrett I.P."/>
            <person name="Bates K.N."/>
            <person name="Beare D.M."/>
            <person name="Beasley H."/>
            <person name="Beasley O."/>
            <person name="Beck A."/>
            <person name="Bethel G."/>
            <person name="Blechschmidt K."/>
            <person name="Brady N."/>
            <person name="Bray-Allen S."/>
            <person name="Bridgeman A.M."/>
            <person name="Brown A.J."/>
            <person name="Brown M.J."/>
            <person name="Bonnin D."/>
            <person name="Bruford E.A."/>
            <person name="Buhay C."/>
            <person name="Burch P."/>
            <person name="Burford D."/>
            <person name="Burgess J."/>
            <person name="Burrill W."/>
            <person name="Burton J."/>
            <person name="Bye J.M."/>
            <person name="Carder C."/>
            <person name="Carrel L."/>
            <person name="Chako J."/>
            <person name="Chapman J.C."/>
            <person name="Chavez D."/>
            <person name="Chen E."/>
            <person name="Chen G."/>
            <person name="Chen Y."/>
            <person name="Chen Z."/>
            <person name="Chinault C."/>
            <person name="Ciccodicola A."/>
            <person name="Clark S.Y."/>
            <person name="Clarke G."/>
            <person name="Clee C.M."/>
            <person name="Clegg S."/>
            <person name="Clerc-Blankenburg K."/>
            <person name="Clifford K."/>
            <person name="Cobley V."/>
            <person name="Cole C.G."/>
            <person name="Conquer J.S."/>
            <person name="Corby N."/>
            <person name="Connor R.E."/>
            <person name="David R."/>
            <person name="Davies J."/>
            <person name="Davis C."/>
            <person name="Davis J."/>
            <person name="Delgado O."/>
            <person name="Deshazo D."/>
            <person name="Dhami P."/>
            <person name="Ding Y."/>
            <person name="Dinh H."/>
            <person name="Dodsworth S."/>
            <person name="Draper H."/>
            <person name="Dugan-Rocha S."/>
            <person name="Dunham A."/>
            <person name="Dunn M."/>
            <person name="Durbin K.J."/>
            <person name="Dutta I."/>
            <person name="Eades T."/>
            <person name="Ellwood M."/>
            <person name="Emery-Cohen A."/>
            <person name="Errington H."/>
            <person name="Evans K.L."/>
            <person name="Faulkner L."/>
            <person name="Francis F."/>
            <person name="Frankland J."/>
            <person name="Fraser A.E."/>
            <person name="Galgoczy P."/>
            <person name="Gilbert J."/>
            <person name="Gill R."/>
            <person name="Gloeckner G."/>
            <person name="Gregory S.G."/>
            <person name="Gribble S."/>
            <person name="Griffiths C."/>
            <person name="Grocock R."/>
            <person name="Gu Y."/>
            <person name="Gwilliam R."/>
            <person name="Hamilton C."/>
            <person name="Hart E.A."/>
            <person name="Hawes A."/>
            <person name="Heath P.D."/>
            <person name="Heitmann K."/>
            <person name="Hennig S."/>
            <person name="Hernandez J."/>
            <person name="Hinzmann B."/>
            <person name="Ho S."/>
            <person name="Hoffs M."/>
            <person name="Howden P.J."/>
            <person name="Huckle E.J."/>
            <person name="Hume J."/>
            <person name="Hunt P.J."/>
            <person name="Hunt A.R."/>
            <person name="Isherwood J."/>
            <person name="Jacob L."/>
            <person name="Johnson D."/>
            <person name="Jones S."/>
            <person name="de Jong P.J."/>
            <person name="Joseph S.S."/>
            <person name="Keenan S."/>
            <person name="Kelly S."/>
            <person name="Kershaw J.K."/>
            <person name="Khan Z."/>
            <person name="Kioschis P."/>
            <person name="Klages S."/>
            <person name="Knights A.J."/>
            <person name="Kosiura A."/>
            <person name="Kovar-Smith C."/>
            <person name="Laird G.K."/>
            <person name="Langford C."/>
            <person name="Lawlor S."/>
            <person name="Leversha M."/>
            <person name="Lewis L."/>
            <person name="Liu W."/>
            <person name="Lloyd C."/>
            <person name="Lloyd D.M."/>
            <person name="Loulseged H."/>
            <person name="Loveland J.E."/>
            <person name="Lovell J.D."/>
            <person name="Lozado R."/>
            <person name="Lu J."/>
            <person name="Lyne R."/>
            <person name="Ma J."/>
            <person name="Maheshwari M."/>
            <person name="Matthews L.H."/>
            <person name="McDowall J."/>
            <person name="McLaren S."/>
            <person name="McMurray A."/>
            <person name="Meidl P."/>
            <person name="Meitinger T."/>
            <person name="Milne S."/>
            <person name="Miner G."/>
            <person name="Mistry S.L."/>
            <person name="Morgan M."/>
            <person name="Morris S."/>
            <person name="Mueller I."/>
            <person name="Mullikin J.C."/>
            <person name="Nguyen N."/>
            <person name="Nordsiek G."/>
            <person name="Nyakatura G."/>
            <person name="O'dell C.N."/>
            <person name="Okwuonu G."/>
            <person name="Palmer S."/>
            <person name="Pandian R."/>
            <person name="Parker D."/>
            <person name="Parrish J."/>
            <person name="Pasternak S."/>
            <person name="Patel D."/>
            <person name="Pearce A.V."/>
            <person name="Pearson D.M."/>
            <person name="Pelan S.E."/>
            <person name="Perez L."/>
            <person name="Porter K.M."/>
            <person name="Ramsey Y."/>
            <person name="Reichwald K."/>
            <person name="Rhodes S."/>
            <person name="Ridler K.A."/>
            <person name="Schlessinger D."/>
            <person name="Schueler M.G."/>
            <person name="Sehra H.K."/>
            <person name="Shaw-Smith C."/>
            <person name="Shen H."/>
            <person name="Sheridan E.M."/>
            <person name="Shownkeen R."/>
            <person name="Skuce C.D."/>
            <person name="Smith M.L."/>
            <person name="Sotheran E.C."/>
            <person name="Steingruber H.E."/>
            <person name="Steward C.A."/>
            <person name="Storey R."/>
            <person name="Swann R.M."/>
            <person name="Swarbreck D."/>
            <person name="Tabor P.E."/>
            <person name="Taudien S."/>
            <person name="Taylor T."/>
            <person name="Teague B."/>
            <person name="Thomas K."/>
            <person name="Thorpe A."/>
            <person name="Timms K."/>
            <person name="Tracey A."/>
            <person name="Trevanion S."/>
            <person name="Tromans A.C."/>
            <person name="d'Urso M."/>
            <person name="Verduzco D."/>
            <person name="Villasana D."/>
            <person name="Waldron L."/>
            <person name="Wall M."/>
            <person name="Wang Q."/>
            <person name="Warren J."/>
            <person name="Warry G.L."/>
            <person name="Wei X."/>
            <person name="West A."/>
            <person name="Whitehead S.L."/>
            <person name="Whiteley M.N."/>
            <person name="Wilkinson J.E."/>
            <person name="Willey D.L."/>
            <person name="Williams G."/>
            <person name="Williams L."/>
            <person name="Williamson A."/>
            <person name="Williamson H."/>
            <person name="Wilming L."/>
            <person name="Woodmansey R.L."/>
            <person name="Wray P.W."/>
            <person name="Yen J."/>
            <person name="Zhang J."/>
            <person name="Zhou J."/>
            <person name="Zoghbi H."/>
            <person name="Zorilla S."/>
            <person name="Buck D."/>
            <person name="Reinhardt R."/>
            <person name="Poustka A."/>
            <person name="Rosenthal A."/>
            <person name="Lehrach H."/>
            <person name="Meindl A."/>
            <person name="Minx P.J."/>
            <person name="Hillier L.W."/>
            <person name="Willard H.F."/>
            <person name="Wilson R.K."/>
            <person name="Waterston R.H."/>
            <person name="Rice C.M."/>
            <person name="Vaudin M."/>
            <person name="Coulson A."/>
            <person name="Nelson D.L."/>
            <person name="Weinstock G."/>
            <person name="Sulston J.E."/>
            <person name="Durbin R.M."/>
            <person name="Hubbard T."/>
            <person name="Gibbs R.A."/>
            <person name="Beck S."/>
            <person name="Rogers J."/>
            <person name="Bentley D.R."/>
        </authorList>
    </citation>
    <scope>NUCLEOTIDE SEQUENCE [LARGE SCALE GENOMIC DNA]</scope>
</reference>
<reference key="4">
    <citation type="journal article" date="2004" name="Genome Res.">
        <title>The status, quality, and expansion of the NIH full-length cDNA project: the Mammalian Gene Collection (MGC).</title>
        <authorList>
            <consortium name="The MGC Project Team"/>
        </authorList>
    </citation>
    <scope>NUCLEOTIDE SEQUENCE [LARGE SCALE MRNA] (ISOFORM 10)</scope>
</reference>
<reference key="5">
    <citation type="journal article" date="2008" name="Proc. Natl. Acad. Sci. U.S.A.">
        <title>A quantitative atlas of mitotic phosphorylation.</title>
        <authorList>
            <person name="Dephoure N."/>
            <person name="Zhou C."/>
            <person name="Villen J."/>
            <person name="Beausoleil S.A."/>
            <person name="Bakalarski C.E."/>
            <person name="Elledge S.J."/>
            <person name="Gygi S.P."/>
        </authorList>
    </citation>
    <scope>IDENTIFICATION BY MASS SPECTROMETRY [LARGE SCALE ANALYSIS]</scope>
    <source>
        <tissue>Cervix carcinoma</tissue>
    </source>
</reference>
<reference key="6">
    <citation type="journal article" date="2008" name="Reproduction">
        <title>HE6/GPR64 adhesion receptor co-localizes with apical and subapical F-actin scaffold in male excurrent duct epithelia.</title>
        <authorList>
            <person name="Kirchhoff C."/>
            <person name="Osterhoff C."/>
            <person name="Samalecos A."/>
        </authorList>
    </citation>
    <scope>TISSUE SPECIFICITY</scope>
</reference>
<reference key="7">
    <citation type="journal article" date="2010" name="Sci. Signal.">
        <title>Quantitative phosphoproteomics reveals widespread full phosphorylation site occupancy during mitosis.</title>
        <authorList>
            <person name="Olsen J.V."/>
            <person name="Vermeulen M."/>
            <person name="Santamaria A."/>
            <person name="Kumar C."/>
            <person name="Miller M.L."/>
            <person name="Jensen L.J."/>
            <person name="Gnad F."/>
            <person name="Cox J."/>
            <person name="Jensen T.S."/>
            <person name="Nigg E.A."/>
            <person name="Brunak S."/>
            <person name="Mann M."/>
        </authorList>
    </citation>
    <scope>PHOSPHORYLATION [LARGE SCALE ANALYSIS] AT SER-1010</scope>
    <scope>IDENTIFICATION BY MASS SPECTROMETRY [LARGE SCALE ANALYSIS]</scope>
    <source>
        <tissue>Cervix carcinoma</tissue>
    </source>
</reference>
<reference key="8">
    <citation type="journal article" date="2013" name="J. Pathol.">
        <title>G-Protein coupled receptor 64 promotes invasiveness and metastasis in Ewing sarcomas through PGF and MMP1.</title>
        <authorList>
            <person name="Richter G.H."/>
            <person name="Fasan A."/>
            <person name="Hauer K."/>
            <person name="Grunewald T.G."/>
            <person name="Berns C."/>
            <person name="Rossler S."/>
            <person name="Naumann I."/>
            <person name="Staege M.S."/>
            <person name="Fulda S."/>
            <person name="Esposito I."/>
            <person name="Burdach S."/>
        </authorList>
    </citation>
    <scope>TISSUE SPECIFICITY</scope>
</reference>
<reference key="9">
    <citation type="journal article" date="2013" name="J. Proteome Res.">
        <title>Toward a comprehensive characterization of a human cancer cell phosphoproteome.</title>
        <authorList>
            <person name="Zhou H."/>
            <person name="Di Palma S."/>
            <person name="Preisinger C."/>
            <person name="Peng M."/>
            <person name="Polat A.N."/>
            <person name="Heck A.J."/>
            <person name="Mohammed S."/>
        </authorList>
    </citation>
    <scope>PHOSPHORYLATION [LARGE SCALE ANALYSIS] AT SER-1010</scope>
    <scope>IDENTIFICATION BY MASS SPECTROMETRY [LARGE SCALE ANALYSIS]</scope>
    <source>
        <tissue>Cervix carcinoma</tissue>
    </source>
</reference>
<reference key="10">
    <citation type="journal article" date="2015" name="Pharmacol. Rev.">
        <title>International union of basic and clinical pharmacology. XCIV. Adhesion G protein-coupled receptors.</title>
        <authorList>
            <person name="Hamann J."/>
            <person name="Aust G."/>
            <person name="Arac D."/>
            <person name="Engel F.B."/>
            <person name="Formstone C."/>
            <person name="Fredriksson R."/>
            <person name="Hall R.A."/>
            <person name="Harty B.L."/>
            <person name="Kirchhoff C."/>
            <person name="Knapp B."/>
            <person name="Krishnan A."/>
            <person name="Liebscher I."/>
            <person name="Lin H.H."/>
            <person name="Martinelli D.C."/>
            <person name="Monk K.R."/>
            <person name="Peeters M.C."/>
            <person name="Piao X."/>
            <person name="Promel S."/>
            <person name="Schoneberg T."/>
            <person name="Schwartz T.W."/>
            <person name="Singer K."/>
            <person name="Stacey M."/>
            <person name="Ushkaryov Y.A."/>
            <person name="Vallon M."/>
            <person name="Wolfrum U."/>
            <person name="Wright M.W."/>
            <person name="Xu L."/>
            <person name="Langenhan T."/>
            <person name="Schioth H.B."/>
        </authorList>
    </citation>
    <scope>NOMENCLATURE</scope>
</reference>
<reference key="11">
    <citation type="journal article" date="2016" name="Am. J. Hum. Genet.">
        <title>Truncating mutations in the adhesion G protein-coupled receptor G2 gene ADGRG2 cause an X-Linked congenital bilateral absence of vas deferens.</title>
        <authorList>
            <person name="Patat O."/>
            <person name="Pagin A."/>
            <person name="Siegfried A."/>
            <person name="Mitchell V."/>
            <person name="Chassaing N."/>
            <person name="Faguer S."/>
            <person name="Monteil L."/>
            <person name="Gaston V."/>
            <person name="Bujan L."/>
            <person name="Courtade-Saidi M."/>
            <person name="Marcelli F."/>
            <person name="Lalau G."/>
            <person name="Rigot J.M."/>
            <person name="Mieusset R."/>
            <person name="Bieth E."/>
        </authorList>
    </citation>
    <scope>INVOLVEMENT IN CBAVDX</scope>
    <scope>TISSUE SPECIFICITY</scope>
</reference>
<reference key="12">
    <citation type="journal article" date="2018" name="Elife">
        <title>Gq activity- and beta-arrestin-1 scaffolding-mediated ADGRG2/CFTR coupling are required for male fertility.</title>
        <authorList>
            <person name="Zhang D.L."/>
            <person name="Sun Y.J."/>
            <person name="Ma M.L."/>
            <person name="Wang Y.J."/>
            <person name="Lin H."/>
            <person name="Li R.R."/>
            <person name="Liang Z.L."/>
            <person name="Gao Y."/>
            <person name="Yang Z."/>
            <person name="He D.F."/>
            <person name="Lin A."/>
            <person name="Mo H."/>
            <person name="Lu Y.J."/>
            <person name="Li M.J."/>
            <person name="Kong W."/>
            <person name="Chung K.Y."/>
            <person name="Yi F."/>
            <person name="Li J.Y."/>
            <person name="Qin Y.Y."/>
            <person name="Li J."/>
            <person name="Thomsen A.R.B."/>
            <person name="Kahsai A.W."/>
            <person name="Chen Z.J."/>
            <person name="Xu Z.G."/>
            <person name="Liu M."/>
            <person name="Li D."/>
            <person name="Yu X."/>
            <person name="Sun J.P."/>
        </authorList>
    </citation>
    <scope>FUNCTION</scope>
    <scope>SUBCELLULAR LOCATION</scope>
    <scope>INTERACTION WITH CFTR</scope>
    <scope>MUTAGENESIS OF TYR-720; PHE-727; TYR-730 AND 825-ARG-LYS-826</scope>
</reference>
<reference key="13">
    <citation type="journal article" date="2021" name="J. Biol. Chem.">
        <title>Optimization of a peptide ligand for the adhesion GPCR ADGRG2 provides a potent tool to explore receptor biology.</title>
        <authorList>
            <person name="Sun Y."/>
            <person name="Zhang D."/>
            <person name="Ma M.L."/>
            <person name="Lin H."/>
            <person name="Song Y."/>
            <person name="Wang J."/>
            <person name="Ma C."/>
            <person name="Yu K."/>
            <person name="An W."/>
            <person name="Guo S."/>
            <person name="He D."/>
            <person name="Yang Z."/>
            <person name="Xiao P."/>
            <person name="Hou G."/>
            <person name="Yu X."/>
            <person name="Sun J.P."/>
        </authorList>
    </citation>
    <scope>FUNCTION</scope>
    <scope>DOMAIN</scope>
    <scope>MUTAGENESIS OF PHE-786; TYR-787; VAL-790 AND PHE-794</scope>
</reference>
<reference key="14">
    <citation type="journal article" date="2021" name="Sci. Rep.">
        <title>Conserved residues in the extracellular loop 2 regulate Stachel-mediated activation of ADGRG2.</title>
        <authorList>
            <person name="Gad A.A."/>
            <person name="Azimzadeh P."/>
            <person name="Balenga N."/>
        </authorList>
    </citation>
    <scope>FUNCTION</scope>
    <scope>SUBCELLULAR LOCATION</scope>
    <scope>MUTAGENESIS OF 779-TRP-ILE-780; TRP-779 AND ILE-780</scope>
</reference>
<reference key="15">
    <citation type="journal article" date="2022" name="Nat. Chem. Biol.">
        <title>Structures of the ADGRG2-Gs complex in apo and ligand-bound forms.</title>
        <authorList>
            <person name="Lin H."/>
            <person name="Xiao P."/>
            <person name="Bu R.Q."/>
            <person name="Guo S."/>
            <person name="Yang Z."/>
            <person name="Yuan D."/>
            <person name="Zhu Z.L."/>
            <person name="Zhang C.X."/>
            <person name="He Q.T."/>
            <person name="Zhang C."/>
            <person name="Ping Y.Q."/>
            <person name="Zhao R.J."/>
            <person name="Ma C.S."/>
            <person name="Liu C.H."/>
            <person name="Zhang X.N."/>
            <person name="Jiang D."/>
            <person name="Huang S."/>
            <person name="Xi Y.T."/>
            <person name="Zhang D.L."/>
            <person name="Xue C.Y."/>
            <person name="Yang B.S."/>
            <person name="Li J.Y."/>
            <person name="Lin H.C."/>
            <person name="Zeng X.H."/>
            <person name="Zhao H."/>
            <person name="Xu W.M."/>
            <person name="Yi F."/>
            <person name="Liu Z."/>
            <person name="Sun J.P."/>
            <person name="Yu X."/>
        </authorList>
    </citation>
    <scope>FUNCTION</scope>
    <scope>ACTIVITY REGULATION</scope>
</reference>
<reference key="16">
    <citation type="journal article" date="2025" name="Cell">
        <title>Identification, structure, and agonist design of an androgen membrane receptor.</title>
        <authorList>
            <person name="Yang Z."/>
            <person name="Ping Y.Q."/>
            <person name="Wang M.W."/>
            <person name="Zhang C."/>
            <person name="Zhou S.H."/>
            <person name="Xi Y.T."/>
            <person name="Zhu K.K."/>
            <person name="Ding W."/>
            <person name="Zhang Q.Y."/>
            <person name="Song Z.C."/>
            <person name="Zhao R.J."/>
            <person name="He Z.L."/>
            <person name="Wang M.X."/>
            <person name="Qi L."/>
            <person name="Ullmann C."/>
            <person name="Ricken A."/>
            <person name="Schoeneberg T."/>
            <person name="Gan Z.J."/>
            <person name="Yu X."/>
            <person name="Xiao P."/>
            <person name="Yi F."/>
            <person name="Liebscher I."/>
            <person name="Sun J.P."/>
        </authorList>
    </citation>
    <scope>FUNCTION</scope>
    <scope>MUTAGENESIS OF PHE-679; LEU-705; TRP-846; PHE-864 AND ASN-868</scope>
</reference>
<reference key="17">
    <citation type="journal article" date="2012" name="Transl. Psychiatry">
        <title>Analysis of the chromosome X exome in patients with autism spectrum disorders identified novel candidate genes, including TMLHE.</title>
        <authorList>
            <person name="Nava C."/>
            <person name="Lamari F."/>
            <person name="Heron D."/>
            <person name="Mignot C."/>
            <person name="Rastetter A."/>
            <person name="Keren B."/>
            <person name="Cohen D."/>
            <person name="Faudet A."/>
            <person name="Bouteiller D."/>
            <person name="Gilleron M."/>
            <person name="Jacquette A."/>
            <person name="Whalen S."/>
            <person name="Afenjar A."/>
            <person name="Perisse D."/>
            <person name="Laurent C."/>
            <person name="Dupuits C."/>
            <person name="Gautier C."/>
            <person name="Gerard M."/>
            <person name="Huguet G."/>
            <person name="Caillet S."/>
            <person name="Leheup B."/>
            <person name="Leboyer M."/>
            <person name="Gillberg C."/>
            <person name="Delorme R."/>
            <person name="Bourgeron T."/>
            <person name="Brice A."/>
            <person name="Depienne C."/>
        </authorList>
    </citation>
    <scope>VARIANT SER-224</scope>
</reference>
<reference key="18">
    <citation type="journal article" date="2018" name="Mol. Psychiatry">
        <title>Mapping autosomal recessive intellectual disability: combined microarray and exome sequencing identifies 26 novel candidate genes in 192 consanguineous families.</title>
        <authorList>
            <person name="Harripaul R."/>
            <person name="Vasli N."/>
            <person name="Mikhailov A."/>
            <person name="Rafiq M.A."/>
            <person name="Mittal K."/>
            <person name="Windpassinger C."/>
            <person name="Sheikh T.I."/>
            <person name="Noor A."/>
            <person name="Mahmood H."/>
            <person name="Downey S."/>
            <person name="Johnson M."/>
            <person name="Vleuten K."/>
            <person name="Bell L."/>
            <person name="Ilyas M."/>
            <person name="Khan F.S."/>
            <person name="Khan V."/>
            <person name="Moradi M."/>
            <person name="Ayaz M."/>
            <person name="Naeem F."/>
            <person name="Heidari A."/>
            <person name="Ahmed I."/>
            <person name="Ghadami S."/>
            <person name="Agha Z."/>
            <person name="Zeinali S."/>
            <person name="Qamar R."/>
            <person name="Mozhdehipanah H."/>
            <person name="John P."/>
            <person name="Mir A."/>
            <person name="Ansar M."/>
            <person name="French L."/>
            <person name="Ayub M."/>
            <person name="Vincent J.B."/>
        </authorList>
    </citation>
    <scope>VARIANT SER-64</scope>
</reference>
<reference key="19">
    <citation type="journal article" date="2018" name="Sci. Rep.">
        <title>X-linked ADGRG2 mutation and obstructive azoospermia in a large Pakistani family.</title>
        <authorList>
            <person name="Khan M.J."/>
            <person name="Pollock N."/>
            <person name="Jiang H."/>
            <person name="Castro C."/>
            <person name="Nazli R."/>
            <person name="Ahmed J."/>
            <person name="Basit S."/>
            <person name="Rajkovic A."/>
            <person name="Yatsenko A.N."/>
        </authorList>
    </citation>
    <scope>VARIANT CBAVDX 814-ARG--MET-1017 DEL</scope>
</reference>
<reference key="20">
    <citation type="journal article" date="2020" name="Andrology">
        <title>Novel ADGRG2 truncating variants in patients with X-linked congenital absence of vas deferens.</title>
        <authorList>
            <person name="Pagin A."/>
            <person name="Bergougnoux A."/>
            <person name="Girodon E."/>
            <person name="Reboul M.P."/>
            <person name="Willoquaux C."/>
            <person name="Kesteloot M."/>
            <person name="Raynal C."/>
            <person name="Bienvenu T."/>
            <person name="Humbert M."/>
            <person name="Lalau G."/>
            <person name="Bieth E."/>
        </authorList>
    </citation>
    <scope>VARIANTS CBAVDX 84-SER--MET-1017 DEL AND 825-ARG--MET-1017 DEL</scope>
</reference>
<reference key="21">
    <citation type="journal article" date="2020" name="J. Assist. Reprod. Genet.">
        <title>A novel hemizygous loss-of-function mutation in ADGRG2 causes male infertility with congenital bilateral absence of the vas deferens.</title>
        <authorList>
            <person name="Wu H."/>
            <person name="Gao Y."/>
            <person name="Ma C."/>
            <person name="Shen Q."/>
            <person name="Wang J."/>
            <person name="Lv M."/>
            <person name="Liu C."/>
            <person name="Cheng H."/>
            <person name="Zhu F."/>
            <person name="Tian S."/>
            <person name="Elshewy N."/>
            <person name="Ni X."/>
            <person name="Tan Q."/>
            <person name="Xu X."/>
            <person name="Zhou P."/>
            <person name="Wei Z."/>
            <person name="Zhang F."/>
            <person name="He X."/>
            <person name="Cao Y."/>
        </authorList>
    </citation>
    <scope>VARIANT CBAVDX 40-GLU--MET-1017 DEL</scope>
    <scope>CHARACTERIZATION OF VARIANT CBAVDX 40-GLU--MET-1017 DEL</scope>
    <scope>SUBCELLULAR LOCATION</scope>
</reference>
<reference key="22">
    <citation type="journal article" date="2023" name="J. Assist. Reprod. Genet.">
        <title>A novel ADGRG2 truncating variant associated with X-linked obstructive azoospermia in a large Chinese pedigree.</title>
        <authorList>
            <person name="Lu Y."/>
            <person name="Xie Y."/>
            <person name="Li M."/>
            <person name="Zuo N."/>
            <person name="Ning S."/>
            <person name="Luo B."/>
            <person name="Ning M."/>
            <person name="Song J."/>
            <person name="Liang Y."/>
            <person name="Qin Y."/>
        </authorList>
    </citation>
    <scope>VARIANT CBAVDX 303-SER--MET-1017 DEL</scope>
</reference>
<comment type="function">
    <text evidence="11 15 16 17 19">Adhesion G-protein coupled receptor (aGPCR) for steroid hormones, such as dehydroepiandrosterone (DHEA; also named 3beta-hydroxyandrost-5-en-17-one) and androstenedione (PubMed:29393851, PubMed:35982227, PubMed:39884271). Involved in a signal transduction pathway controlling epididymal function and male fertility (PubMed:29393851). Ligand binding causes a conformation change that triggers signaling via guanine nucleotide-binding proteins (G proteins) and modulates the activity of downstream effectors, such as adenylate cyclase (PubMed:33303626, PubMed:34234254). ADGRG2 is coupled to G(s) G proteins and mediates activation of adenylate cyclase activity (PubMed:29393851, PubMed:34234254). Also able to couple with G(q) G proteins in vitro (PubMed:29393851). Together with CFTR, required to promote fluid reabsorption within efferent ductule (PubMed:29393851).</text>
</comment>
<comment type="activity regulation">
    <text evidence="1 17">Forms a heterodimer of 2 chains generated by proteolytic processing that remain associated through non-covalent interactions mediated by the GAIN-B domain (By similarity). In the inactivated receptor, the Stachel sequence (also named stalk) is embedded in the GAIN-B domain, where it adopts a beta-strand conformation (By similarity). On activation, the Stachel moves into the 7 transmembrane region and adopts a twisted hook-shaped configuration that forms contacts within the receptor, leading to coupling of a G-alpha protein, which activates signaling (By similarity). The cleaved GAIN-B and N-terminal domains can then dissociate from the rest of the receptor (By similarity). Deoxycorticosterone (DOC) acts as an antagonist of ADGRG2 (PubMed:35982227).</text>
</comment>
<comment type="subunit">
    <text evidence="3 11">Heterodimer of 2 chains generated by proteolytic processing; the large extracellular N-terminal fragment and the membrane-bound C-terminal fragment predominantly remain associated and non-covalently linked (By similarity). Interacts with CFTR (PubMed:29393851).</text>
</comment>
<comment type="subcellular location">
    <subcellularLocation>
        <location evidence="5 11 14 15 16">Apical cell membrane</location>
        <topology evidence="2">Multi-pass membrane protein</topology>
    </subcellularLocation>
</comment>
<comment type="alternative products">
    <event type="alternative splicing"/>
    <isoform>
        <id>Q8IZP9-1</id>
        <name>1</name>
        <name>Long splice variant</name>
        <sequence type="displayed"/>
    </isoform>
    <isoform>
        <id>Q8IZP9-2</id>
        <name>2</name>
        <sequence type="described" ref="VSP_009791"/>
    </isoform>
    <isoform>
        <id>Q8IZP9-3</id>
        <name>3</name>
        <name>d1</name>
        <sequence type="described" ref="VSP_009792"/>
    </isoform>
    <isoform>
        <id>Q8IZP9-4</id>
        <name>4</name>
        <name>24</name>
        <sequence type="described" ref="VSP_009793"/>
    </isoform>
    <isoform>
        <id>Q8IZP9-5</id>
        <name>5</name>
        <name>23</name>
        <sequence type="described" ref="VSP_009794"/>
    </isoform>
    <isoform>
        <id>Q8IZP9-6</id>
        <name>6</name>
        <name>d3</name>
        <sequence type="described" ref="VSP_009795"/>
    </isoform>
    <isoform>
        <id>Q8IZP9-7</id>
        <name>7</name>
        <name>d2</name>
        <sequence type="described" ref="VSP_009796"/>
    </isoform>
    <isoform>
        <id>Q8IZP9-8</id>
        <name>8</name>
        <name>21</name>
        <sequence type="described" ref="VSP_009797"/>
    </isoform>
    <isoform>
        <id>Q8IZP9-9</id>
        <name>9</name>
        <name>Delta exon 28</name>
        <sequence type="described" ref="VSP_009798"/>
    </isoform>
    <isoform>
        <id>Q8IZP9-10</id>
        <name>10</name>
        <sequence type="described" ref="VSP_009792 VSP_009793 VSP_054522"/>
    </isoform>
</comment>
<comment type="tissue specificity">
    <text evidence="5 6 8 9 20">Epididymis-specific expression (at protein level). Both subunits are associated with apical membranes of efferent ductule and proximal epididymal duct epithelia. Mainly expressed in the nonciliated principal cells of the proximal excurrent ducts. Specifically over-expressed in Ewing sarcomas but also up-regulated in a number of carcinomas derived from prostate, kidney or lung.</text>
</comment>
<comment type="domain">
    <text evidence="1 15">The Stachel sequence (also named stalk) in the C-terminal part of the extracellular domain (ECD) functions as a tethered agonist (PubMed:33303626). In the inactivated receptor, the Stachel sequence (also named stalk) is embedded in the GAIN-B domain, where it adopts a beta-strand conformation (By similarity). On activation, the Stachel moves into the 7 transmembrane region and adopts a twisted hook-shaped configuration that forms contacts within the receptor, leading to coupling of a G-alpha protein, which activates signaling (By similarity).</text>
</comment>
<comment type="PTM">
    <text evidence="3">Proteolytically cleaved into 2 subunits, an extracellular subunit and a seven-transmembrane subunit.</text>
</comment>
<comment type="PTM">
    <text evidence="5">Highly glycosylated.</text>
</comment>
<comment type="disease" evidence="9 12 13 14 18">
    <disease id="DI-04817">
        <name>Congenital bilateral aplasia of the vas deferens, X-linked</name>
        <acronym>CBAVDX</acronym>
        <description>A disease characterized by bilateral absence of vas deferens, obstructive azoospermia, and infertility.</description>
        <dbReference type="MIM" id="300985"/>
    </disease>
    <text>The disease is caused by variants affecting the gene represented in this entry.</text>
</comment>
<comment type="similarity">
    <text evidence="26">Belongs to the G-protein coupled receptor 2 family. Adhesion G-protein coupled receptor (ADGR) subfamily.</text>
</comment>